<reference key="1">
    <citation type="journal article" date="2010" name="J. Bacteriol.">
        <title>The genetic basis of laboratory adaptation in Caulobacter crescentus.</title>
        <authorList>
            <person name="Marks M.E."/>
            <person name="Castro-Rojas C.M."/>
            <person name="Teiling C."/>
            <person name="Du L."/>
            <person name="Kapatral V."/>
            <person name="Walunas T.L."/>
            <person name="Crosson S."/>
        </authorList>
    </citation>
    <scope>NUCLEOTIDE SEQUENCE [LARGE SCALE GENOMIC DNA]</scope>
    <source>
        <strain>NA1000 / CB15N</strain>
    </source>
</reference>
<keyword id="KW-0997">Cell inner membrane</keyword>
<keyword id="KW-1003">Cell membrane</keyword>
<keyword id="KW-0285">Flavoprotein</keyword>
<keyword id="KW-0288">FMN</keyword>
<keyword id="KW-0472">Membrane</keyword>
<keyword id="KW-0560">Oxidoreductase</keyword>
<keyword id="KW-1185">Reference proteome</keyword>
<gene>
    <name evidence="1" type="primary">lldD</name>
    <name type="ordered locus">CCNA_01209</name>
</gene>
<protein>
    <recommendedName>
        <fullName evidence="1">L-lactate dehydrogenase</fullName>
        <ecNumber evidence="1">1.1.-.-</ecNumber>
    </recommendedName>
</protein>
<accession>B8H3Q5</accession>
<feature type="chain" id="PRO_0000383415" description="L-lactate dehydrogenase">
    <location>
        <begin position="1"/>
        <end position="383"/>
    </location>
</feature>
<feature type="domain" description="FMN hydroxy acid dehydrogenase" evidence="1">
    <location>
        <begin position="1"/>
        <end position="380"/>
    </location>
</feature>
<feature type="active site" description="Proton acceptor" evidence="1">
    <location>
        <position position="275"/>
    </location>
</feature>
<feature type="binding site" evidence="1">
    <location>
        <position position="24"/>
    </location>
    <ligand>
        <name>substrate</name>
    </ligand>
</feature>
<feature type="binding site" evidence="1">
    <location>
        <position position="106"/>
    </location>
    <ligand>
        <name>FMN</name>
        <dbReference type="ChEBI" id="CHEBI:58210"/>
    </ligand>
</feature>
<feature type="binding site" evidence="1">
    <location>
        <position position="127"/>
    </location>
    <ligand>
        <name>FMN</name>
        <dbReference type="ChEBI" id="CHEBI:58210"/>
    </ligand>
</feature>
<feature type="binding site" evidence="1">
    <location>
        <position position="129"/>
    </location>
    <ligand>
        <name>substrate</name>
    </ligand>
</feature>
<feature type="binding site" evidence="1">
    <location>
        <position position="155"/>
    </location>
    <ligand>
        <name>FMN</name>
        <dbReference type="ChEBI" id="CHEBI:58210"/>
    </ligand>
</feature>
<feature type="binding site" evidence="1">
    <location>
        <position position="164"/>
    </location>
    <ligand>
        <name>substrate</name>
    </ligand>
</feature>
<feature type="binding site" evidence="1">
    <location>
        <position position="251"/>
    </location>
    <ligand>
        <name>FMN</name>
        <dbReference type="ChEBI" id="CHEBI:58210"/>
    </ligand>
</feature>
<feature type="binding site" evidence="1">
    <location>
        <position position="278"/>
    </location>
    <ligand>
        <name>substrate</name>
    </ligand>
</feature>
<feature type="binding site" evidence="1">
    <location>
        <begin position="306"/>
        <end position="330"/>
    </location>
    <ligand>
        <name>FMN</name>
        <dbReference type="ChEBI" id="CHEBI:58210"/>
    </ligand>
</feature>
<dbReference type="EC" id="1.1.-.-" evidence="1"/>
<dbReference type="EMBL" id="CP001340">
    <property type="protein sequence ID" value="ACL94674.1"/>
    <property type="molecule type" value="Genomic_DNA"/>
</dbReference>
<dbReference type="RefSeq" id="WP_010919035.1">
    <property type="nucleotide sequence ID" value="NC_011916.1"/>
</dbReference>
<dbReference type="RefSeq" id="YP_002516582.1">
    <property type="nucleotide sequence ID" value="NC_011916.1"/>
</dbReference>
<dbReference type="SMR" id="B8H3Q5"/>
<dbReference type="GeneID" id="7333602"/>
<dbReference type="KEGG" id="ccs:CCNA_01209"/>
<dbReference type="PATRIC" id="fig|565050.3.peg.1191"/>
<dbReference type="HOGENOM" id="CLU_020639_0_0_5"/>
<dbReference type="OrthoDB" id="9770452at2"/>
<dbReference type="PhylomeDB" id="B8H3Q5"/>
<dbReference type="Proteomes" id="UP000001364">
    <property type="component" value="Chromosome"/>
</dbReference>
<dbReference type="GO" id="GO:0005886">
    <property type="term" value="C:plasma membrane"/>
    <property type="evidence" value="ECO:0007669"/>
    <property type="project" value="UniProtKB-SubCell"/>
</dbReference>
<dbReference type="GO" id="GO:0010181">
    <property type="term" value="F:FMN binding"/>
    <property type="evidence" value="ECO:0007669"/>
    <property type="project" value="InterPro"/>
</dbReference>
<dbReference type="GO" id="GO:0004459">
    <property type="term" value="F:L-lactate dehydrogenase activity"/>
    <property type="evidence" value="ECO:0007669"/>
    <property type="project" value="UniProtKB-UniRule"/>
</dbReference>
<dbReference type="GO" id="GO:0009060">
    <property type="term" value="P:aerobic respiration"/>
    <property type="evidence" value="ECO:0007669"/>
    <property type="project" value="TreeGrafter"/>
</dbReference>
<dbReference type="GO" id="GO:0006089">
    <property type="term" value="P:lactate metabolic process"/>
    <property type="evidence" value="ECO:0007669"/>
    <property type="project" value="UniProtKB-UniRule"/>
</dbReference>
<dbReference type="CDD" id="cd02809">
    <property type="entry name" value="alpha_hydroxyacid_oxid_FMN"/>
    <property type="match status" value="1"/>
</dbReference>
<dbReference type="FunFam" id="3.20.20.70:FF:000029">
    <property type="entry name" value="L-lactate dehydrogenase"/>
    <property type="match status" value="1"/>
</dbReference>
<dbReference type="Gene3D" id="3.20.20.70">
    <property type="entry name" value="Aldolase class I"/>
    <property type="match status" value="1"/>
</dbReference>
<dbReference type="HAMAP" id="MF_01559">
    <property type="entry name" value="L_lact_dehydr"/>
    <property type="match status" value="1"/>
</dbReference>
<dbReference type="InterPro" id="IPR013785">
    <property type="entry name" value="Aldolase_TIM"/>
</dbReference>
<dbReference type="InterPro" id="IPR012133">
    <property type="entry name" value="Alpha-hydoxy_acid_DH_FMN"/>
</dbReference>
<dbReference type="InterPro" id="IPR000262">
    <property type="entry name" value="FMN-dep_DH"/>
</dbReference>
<dbReference type="InterPro" id="IPR037396">
    <property type="entry name" value="FMN_HAD"/>
</dbReference>
<dbReference type="InterPro" id="IPR008259">
    <property type="entry name" value="FMN_hydac_DH_AS"/>
</dbReference>
<dbReference type="InterPro" id="IPR020920">
    <property type="entry name" value="LldD"/>
</dbReference>
<dbReference type="NCBIfam" id="NF033901">
    <property type="entry name" value="L_lactate_LldD"/>
    <property type="match status" value="1"/>
</dbReference>
<dbReference type="NCBIfam" id="NF008398">
    <property type="entry name" value="PRK11197.1"/>
    <property type="match status" value="1"/>
</dbReference>
<dbReference type="PANTHER" id="PTHR10578:SF85">
    <property type="entry name" value="L-LACTATE DEHYDROGENASE"/>
    <property type="match status" value="1"/>
</dbReference>
<dbReference type="PANTHER" id="PTHR10578">
    <property type="entry name" value="S -2-HYDROXY-ACID OXIDASE-RELATED"/>
    <property type="match status" value="1"/>
</dbReference>
<dbReference type="Pfam" id="PF01070">
    <property type="entry name" value="FMN_dh"/>
    <property type="match status" value="1"/>
</dbReference>
<dbReference type="PIRSF" id="PIRSF000138">
    <property type="entry name" value="Al-hdrx_acd_dh"/>
    <property type="match status" value="1"/>
</dbReference>
<dbReference type="SUPFAM" id="SSF51395">
    <property type="entry name" value="FMN-linked oxidoreductases"/>
    <property type="match status" value="1"/>
</dbReference>
<dbReference type="PROSITE" id="PS00557">
    <property type="entry name" value="FMN_HYDROXY_ACID_DH_1"/>
    <property type="match status" value="1"/>
</dbReference>
<dbReference type="PROSITE" id="PS51349">
    <property type="entry name" value="FMN_HYDROXY_ACID_DH_2"/>
    <property type="match status" value="1"/>
</dbReference>
<name>LLDD_CAUVN</name>
<sequence length="383" mass="40720">MIVSSTTDFREAARRRLPRFLFDYIDGGAYAERTMARNIDDLADIALRQRVLMDVSVVDPSTTLFGVRQALPVALAPVGLTGMYARRGECQAARAAAAKGVPFCLSTVSVCDVDEVRAASATPFWFQLYVLRDRGFMRDLLARASAAGATTLVFTVDMPVPGARYRDAHSGMSGPNAAARRLVQAALKPAWAWDVGVMGHPHRLGNVAPALGKASGLQDFMGWLAANFDPSIQWSDLKWIRDAWKGPLVIKGVLDPEDAKAAADIGADGVVVSNHGGRQLDGVLSSARALPAIADAVGDRLTVLADGGVRSGLDVVRMLALGARGVLIGRAYAYALAARGEAGVTQLLDLIDKEMRVAMALTGVRDVASINETILAERVPRAG</sequence>
<organism>
    <name type="scientific">Caulobacter vibrioides (strain NA1000 / CB15N)</name>
    <name type="common">Caulobacter crescentus</name>
    <dbReference type="NCBI Taxonomy" id="565050"/>
    <lineage>
        <taxon>Bacteria</taxon>
        <taxon>Pseudomonadati</taxon>
        <taxon>Pseudomonadota</taxon>
        <taxon>Alphaproteobacteria</taxon>
        <taxon>Caulobacterales</taxon>
        <taxon>Caulobacteraceae</taxon>
        <taxon>Caulobacter</taxon>
    </lineage>
</organism>
<proteinExistence type="inferred from homology"/>
<comment type="function">
    <text evidence="1">Catalyzes the conversion of L-lactate to pyruvate. Is coupled to the respiratory chain.</text>
</comment>
<comment type="catalytic activity">
    <reaction evidence="1">
        <text>(S)-lactate + A = pyruvate + AH2</text>
        <dbReference type="Rhea" id="RHEA:45816"/>
        <dbReference type="ChEBI" id="CHEBI:13193"/>
        <dbReference type="ChEBI" id="CHEBI:15361"/>
        <dbReference type="ChEBI" id="CHEBI:16651"/>
        <dbReference type="ChEBI" id="CHEBI:17499"/>
    </reaction>
</comment>
<comment type="cofactor">
    <cofactor evidence="1">
        <name>FMN</name>
        <dbReference type="ChEBI" id="CHEBI:58210"/>
    </cofactor>
</comment>
<comment type="subcellular location">
    <subcellularLocation>
        <location evidence="1">Cell inner membrane</location>
        <topology evidence="1">Peripheral membrane protein</topology>
    </subcellularLocation>
</comment>
<comment type="similarity">
    <text evidence="1">Belongs to the FMN-dependent alpha-hydroxy acid dehydrogenase family.</text>
</comment>
<evidence type="ECO:0000255" key="1">
    <source>
        <dbReference type="HAMAP-Rule" id="MF_01559"/>
    </source>
</evidence>